<dbReference type="EMBL" id="CP000412">
    <property type="protein sequence ID" value="ABJ58268.1"/>
    <property type="molecule type" value="Genomic_DNA"/>
</dbReference>
<dbReference type="RefSeq" id="WP_003623498.1">
    <property type="nucleotide sequence ID" value="NC_008529.1"/>
</dbReference>
<dbReference type="SMR" id="Q04BA4"/>
<dbReference type="KEGG" id="lbu:LBUL_0642"/>
<dbReference type="HOGENOM" id="CLU_050669_0_1_9"/>
<dbReference type="BioCyc" id="LDEL321956:LBUL_RS03055-MONOMER"/>
<dbReference type="GO" id="GO:0005886">
    <property type="term" value="C:plasma membrane"/>
    <property type="evidence" value="ECO:0007669"/>
    <property type="project" value="UniProtKB-SubCell"/>
</dbReference>
<dbReference type="GO" id="GO:0045259">
    <property type="term" value="C:proton-transporting ATP synthase complex"/>
    <property type="evidence" value="ECO:0007669"/>
    <property type="project" value="UniProtKB-KW"/>
</dbReference>
<dbReference type="GO" id="GO:0005524">
    <property type="term" value="F:ATP binding"/>
    <property type="evidence" value="ECO:0007669"/>
    <property type="project" value="UniProtKB-UniRule"/>
</dbReference>
<dbReference type="GO" id="GO:0046933">
    <property type="term" value="F:proton-transporting ATP synthase activity, rotational mechanism"/>
    <property type="evidence" value="ECO:0007669"/>
    <property type="project" value="UniProtKB-UniRule"/>
</dbReference>
<dbReference type="GO" id="GO:0042777">
    <property type="term" value="P:proton motive force-driven plasma membrane ATP synthesis"/>
    <property type="evidence" value="ECO:0007669"/>
    <property type="project" value="UniProtKB-UniRule"/>
</dbReference>
<dbReference type="CDD" id="cd12151">
    <property type="entry name" value="F1-ATPase_gamma"/>
    <property type="match status" value="1"/>
</dbReference>
<dbReference type="Gene3D" id="3.40.1380.10">
    <property type="match status" value="1"/>
</dbReference>
<dbReference type="Gene3D" id="1.10.287.80">
    <property type="entry name" value="ATP synthase, gamma subunit, helix hairpin domain"/>
    <property type="match status" value="2"/>
</dbReference>
<dbReference type="HAMAP" id="MF_00815">
    <property type="entry name" value="ATP_synth_gamma_bact"/>
    <property type="match status" value="1"/>
</dbReference>
<dbReference type="InterPro" id="IPR035968">
    <property type="entry name" value="ATP_synth_F1_ATPase_gsu"/>
</dbReference>
<dbReference type="InterPro" id="IPR000131">
    <property type="entry name" value="ATP_synth_F1_gsu"/>
</dbReference>
<dbReference type="InterPro" id="IPR023632">
    <property type="entry name" value="ATP_synth_F1_gsu_CS"/>
</dbReference>
<dbReference type="NCBIfam" id="TIGR01146">
    <property type="entry name" value="ATPsyn_F1gamma"/>
    <property type="match status" value="1"/>
</dbReference>
<dbReference type="NCBIfam" id="NF004147">
    <property type="entry name" value="PRK05621.2-1"/>
    <property type="match status" value="1"/>
</dbReference>
<dbReference type="PANTHER" id="PTHR11693">
    <property type="entry name" value="ATP SYNTHASE GAMMA CHAIN"/>
    <property type="match status" value="1"/>
</dbReference>
<dbReference type="PANTHER" id="PTHR11693:SF22">
    <property type="entry name" value="ATP SYNTHASE SUBUNIT GAMMA, MITOCHONDRIAL"/>
    <property type="match status" value="1"/>
</dbReference>
<dbReference type="Pfam" id="PF00231">
    <property type="entry name" value="ATP-synt"/>
    <property type="match status" value="1"/>
</dbReference>
<dbReference type="PRINTS" id="PR00126">
    <property type="entry name" value="ATPASEGAMMA"/>
</dbReference>
<dbReference type="SUPFAM" id="SSF52943">
    <property type="entry name" value="ATP synthase (F1-ATPase), gamma subunit"/>
    <property type="match status" value="1"/>
</dbReference>
<dbReference type="PROSITE" id="PS00153">
    <property type="entry name" value="ATPASE_GAMMA"/>
    <property type="match status" value="1"/>
</dbReference>
<organism>
    <name type="scientific">Lactobacillus delbrueckii subsp. bulgaricus (strain ATCC BAA-365 / Lb-18)</name>
    <dbReference type="NCBI Taxonomy" id="321956"/>
    <lineage>
        <taxon>Bacteria</taxon>
        <taxon>Bacillati</taxon>
        <taxon>Bacillota</taxon>
        <taxon>Bacilli</taxon>
        <taxon>Lactobacillales</taxon>
        <taxon>Lactobacillaceae</taxon>
        <taxon>Lactobacillus</taxon>
    </lineage>
</organism>
<feature type="chain" id="PRO_1000053236" description="ATP synthase gamma chain">
    <location>
        <begin position="1"/>
        <end position="320"/>
    </location>
</feature>
<name>ATPG_LACDB</name>
<proteinExistence type="inferred from homology"/>
<gene>
    <name evidence="1" type="primary">atpG</name>
    <name type="ordered locus">LBUL_0642</name>
</gene>
<accession>Q04BA4</accession>
<comment type="function">
    <text evidence="1">Produces ATP from ADP in the presence of a proton gradient across the membrane. The gamma chain is believed to be important in regulating ATPase activity and the flow of protons through the CF(0) complex.</text>
</comment>
<comment type="subunit">
    <text evidence="1">F-type ATPases have 2 components, CF(1) - the catalytic core - and CF(0) - the membrane proton channel. CF(1) has five subunits: alpha(3), beta(3), gamma(1), delta(1), epsilon(1). CF(0) has three main subunits: a, b and c.</text>
</comment>
<comment type="subcellular location">
    <subcellularLocation>
        <location evidence="1">Cell membrane</location>
        <topology evidence="1">Peripheral membrane protein</topology>
    </subcellularLocation>
</comment>
<comment type="similarity">
    <text evidence="1">Belongs to the ATPase gamma chain family.</text>
</comment>
<evidence type="ECO:0000255" key="1">
    <source>
        <dbReference type="HAMAP-Rule" id="MF_00815"/>
    </source>
</evidence>
<protein>
    <recommendedName>
        <fullName evidence="1">ATP synthase gamma chain</fullName>
    </recommendedName>
    <alternativeName>
        <fullName evidence="1">ATP synthase F1 sector gamma subunit</fullName>
    </alternativeName>
    <alternativeName>
        <fullName evidence="1">F-ATPase gamma subunit</fullName>
    </alternativeName>
</protein>
<reference key="1">
    <citation type="journal article" date="2006" name="Proc. Natl. Acad. Sci. U.S.A.">
        <title>Comparative genomics of the lactic acid bacteria.</title>
        <authorList>
            <person name="Makarova K.S."/>
            <person name="Slesarev A."/>
            <person name="Wolf Y.I."/>
            <person name="Sorokin A."/>
            <person name="Mirkin B."/>
            <person name="Koonin E.V."/>
            <person name="Pavlov A."/>
            <person name="Pavlova N."/>
            <person name="Karamychev V."/>
            <person name="Polouchine N."/>
            <person name="Shakhova V."/>
            <person name="Grigoriev I."/>
            <person name="Lou Y."/>
            <person name="Rohksar D."/>
            <person name="Lucas S."/>
            <person name="Huang K."/>
            <person name="Goodstein D.M."/>
            <person name="Hawkins T."/>
            <person name="Plengvidhya V."/>
            <person name="Welker D."/>
            <person name="Hughes J."/>
            <person name="Goh Y."/>
            <person name="Benson A."/>
            <person name="Baldwin K."/>
            <person name="Lee J.-H."/>
            <person name="Diaz-Muniz I."/>
            <person name="Dosti B."/>
            <person name="Smeianov V."/>
            <person name="Wechter W."/>
            <person name="Barabote R."/>
            <person name="Lorca G."/>
            <person name="Altermann E."/>
            <person name="Barrangou R."/>
            <person name="Ganesan B."/>
            <person name="Xie Y."/>
            <person name="Rawsthorne H."/>
            <person name="Tamir D."/>
            <person name="Parker C."/>
            <person name="Breidt F."/>
            <person name="Broadbent J.R."/>
            <person name="Hutkins R."/>
            <person name="O'Sullivan D."/>
            <person name="Steele J."/>
            <person name="Unlu G."/>
            <person name="Saier M.H. Jr."/>
            <person name="Klaenhammer T."/>
            <person name="Richardson P."/>
            <person name="Kozyavkin S."/>
            <person name="Weimer B.C."/>
            <person name="Mills D.A."/>
        </authorList>
    </citation>
    <scope>NUCLEOTIDE SEQUENCE [LARGE SCALE GENOMIC DNA]</scope>
    <source>
        <strain>ATCC BAA-365 / Lb-18</strain>
    </source>
</reference>
<sequence length="320" mass="35385">MPASLLELKKRIASVKQTSKITEAMHMVSAAKLNQTEKRDKGYQEYNRLLHQTVSRLMSASVINHLNKANYRLTQDNIDSIDYDDVFGMGIISDMIKPREEVHSVGYLVVTGDRGLVGSYNSSVIKQMMSLVADDKLQGRESKILSVGSVGSQFFKKNNLNVVYEKDGVSDVPTFKETLPIVSTAIKMYLNGVYDELYVCYTHHVNSLSSAFRAEKMLPIVDLDIGTMEAKESKKIEFEVAPDIDSVLATLLPQFARAEIYGAILDAKTAEHASSMTAMKSATDNAKDLVSSLSLQMNRARQAQITTELTEIVSGANALE</sequence>
<keyword id="KW-0066">ATP synthesis</keyword>
<keyword id="KW-1003">Cell membrane</keyword>
<keyword id="KW-0139">CF(1)</keyword>
<keyword id="KW-0375">Hydrogen ion transport</keyword>
<keyword id="KW-0406">Ion transport</keyword>
<keyword id="KW-0472">Membrane</keyword>
<keyword id="KW-0813">Transport</keyword>